<keyword id="KW-0326">Glycosidase</keyword>
<keyword id="KW-0378">Hydrolase</keyword>
<keyword id="KW-0460">Magnesium</keyword>
<keyword id="KW-0479">Metal-binding</keyword>
<keyword id="KW-1185">Reference proteome</keyword>
<keyword id="KW-0915">Sodium</keyword>
<sequence>MSDSVLSNPTRQHATLREILARRDWENPACTNYQRLPAHPPFNSWRNVAAAHQDEPSQRLRRLNGEWKFSYFTRPEAVPESWLQQDLPDSATIPVPSNWQLQGYDTPIYTNVKYPIPVNPPYVPEDNPTGCYSLTFKVNHDWLSCGQTRVIFDGVNSAFYLWCNGHWVGYSQDSRLPAEFDISRYLTTGENRLAVMVLRWSDGSYLEDQDMWRMSGIFRDVTLLHKPTVHLGDIQLTTPLSADFRHGTLDIQVKATLSESEAKNYRVHAQLWRGNNLIGETRQAFGSDIVDERGTYHDRASLRLDVTRPDLWSAELPHLYRAVIALETAEGELLEAEAYDVGFRKVEISNGLLLLNGKPLLIRGVNRHEHHPQNGQVMDEETMRRDIMLMKQHNFNAVRCSHYPNHPLWYRLCDRYGLYVVDEANIETHGMQPMNRLSDDPMWLPAYSERVSRMVQRDRNHPCIIIWSLGNESGYGANHDALYQWIKRHDPTRPVHYEGGGANSRATDIVCPMYARVDEDQPFPNVPKWSISKWISMPNEHRPLILCEYAHAMGNSLGGFARYWKAFRQYPRLQGGFIWDWVDQALIRHDEQGNAYWAYGGDFGDMPNDRQFCLDGLLFPDRTPHPSLYEAQRAQQHIQFVWQAESPCELRVTSEYLFRHTDNEQLNWHITLDDKTLVEGSLPLKLAPQATQTLTLLESLPTVDRAGEIWLNVEVVQPKETAWSKANHRCAWDQWQLPIPLHLPEASCSKQKIPPVLRASDIYFDVVQGEQHWRFNRQSGLLEQWWTADTPALLTPLQDQFVRAPLDNDIGISEVDRIDPHAWAERWKSAGLYQLQTQCVAIQADQLADAVHIVTEHVFRHAGQILLRSKKRWQIDAYGVMTVDVDVDVATVLPSLARVGLSCQLADVAPQVSWIGLGPHENYPDRQLAAQHGHWNLPLDDLHTPYIFPSENGLRCNTRALTYGKWAITGNFHFGLSRYGLTQLMTCTHHHLLEKEKGVWLNLDGFHMGIGGDDSWSPSVHCDDLLTATHYHYRVAIQRH</sequence>
<evidence type="ECO:0000255" key="1">
    <source>
        <dbReference type="HAMAP-Rule" id="MF_01687"/>
    </source>
</evidence>
<proteinExistence type="inferred from homology"/>
<dbReference type="EC" id="3.2.1.23" evidence="1"/>
<dbReference type="EMBL" id="BX950851">
    <property type="protein sequence ID" value="CAG74399.1"/>
    <property type="molecule type" value="Genomic_DNA"/>
</dbReference>
<dbReference type="RefSeq" id="WP_011093073.1">
    <property type="nucleotide sequence ID" value="NC_004547.2"/>
</dbReference>
<dbReference type="SMR" id="Q6D736"/>
<dbReference type="STRING" id="218491.ECA1490"/>
<dbReference type="CAZy" id="GH2">
    <property type="family name" value="Glycoside Hydrolase Family 2"/>
</dbReference>
<dbReference type="KEGG" id="eca:ECA1490"/>
<dbReference type="PATRIC" id="fig|218491.5.peg.1529"/>
<dbReference type="eggNOG" id="COG3250">
    <property type="taxonomic scope" value="Bacteria"/>
</dbReference>
<dbReference type="HOGENOM" id="CLU_002346_0_2_6"/>
<dbReference type="OrthoDB" id="9758603at2"/>
<dbReference type="Proteomes" id="UP000007966">
    <property type="component" value="Chromosome"/>
</dbReference>
<dbReference type="GO" id="GO:0009341">
    <property type="term" value="C:beta-galactosidase complex"/>
    <property type="evidence" value="ECO:0007669"/>
    <property type="project" value="InterPro"/>
</dbReference>
<dbReference type="GO" id="GO:0004565">
    <property type="term" value="F:beta-galactosidase activity"/>
    <property type="evidence" value="ECO:0007669"/>
    <property type="project" value="UniProtKB-EC"/>
</dbReference>
<dbReference type="GO" id="GO:0030246">
    <property type="term" value="F:carbohydrate binding"/>
    <property type="evidence" value="ECO:0007669"/>
    <property type="project" value="InterPro"/>
</dbReference>
<dbReference type="GO" id="GO:0000287">
    <property type="term" value="F:magnesium ion binding"/>
    <property type="evidence" value="ECO:0007669"/>
    <property type="project" value="UniProtKB-UniRule"/>
</dbReference>
<dbReference type="GO" id="GO:0005990">
    <property type="term" value="P:lactose catabolic process"/>
    <property type="evidence" value="ECO:0007669"/>
    <property type="project" value="TreeGrafter"/>
</dbReference>
<dbReference type="FunFam" id="2.60.120.260:FF:000058">
    <property type="entry name" value="Beta-galactosidase"/>
    <property type="match status" value="1"/>
</dbReference>
<dbReference type="FunFam" id="3.20.20.80:FF:000018">
    <property type="entry name" value="Beta-galactosidase"/>
    <property type="match status" value="1"/>
</dbReference>
<dbReference type="Gene3D" id="2.70.98.10">
    <property type="match status" value="1"/>
</dbReference>
<dbReference type="Gene3D" id="2.60.120.260">
    <property type="entry name" value="Galactose-binding domain-like"/>
    <property type="match status" value="1"/>
</dbReference>
<dbReference type="Gene3D" id="3.20.20.80">
    <property type="entry name" value="Glycosidases"/>
    <property type="match status" value="1"/>
</dbReference>
<dbReference type="Gene3D" id="2.60.40.10">
    <property type="entry name" value="Immunoglobulins"/>
    <property type="match status" value="2"/>
</dbReference>
<dbReference type="HAMAP" id="MF_01687">
    <property type="entry name" value="Beta_gal"/>
    <property type="match status" value="1"/>
</dbReference>
<dbReference type="InterPro" id="IPR004199">
    <property type="entry name" value="B-gal_small/dom_5"/>
</dbReference>
<dbReference type="InterPro" id="IPR050347">
    <property type="entry name" value="Bact_Beta-galactosidase"/>
</dbReference>
<dbReference type="InterPro" id="IPR036156">
    <property type="entry name" value="Beta-gal/glucu_dom_sf"/>
</dbReference>
<dbReference type="InterPro" id="IPR011013">
    <property type="entry name" value="Gal_mutarotase_sf_dom"/>
</dbReference>
<dbReference type="InterPro" id="IPR008979">
    <property type="entry name" value="Galactose-bd-like_sf"/>
</dbReference>
<dbReference type="InterPro" id="IPR014718">
    <property type="entry name" value="GH-type_carb-bd"/>
</dbReference>
<dbReference type="InterPro" id="IPR006101">
    <property type="entry name" value="Glyco_hydro_2"/>
</dbReference>
<dbReference type="InterPro" id="IPR023232">
    <property type="entry name" value="Glyco_hydro_2_AS"/>
</dbReference>
<dbReference type="InterPro" id="IPR023933">
    <property type="entry name" value="Glyco_hydro_2_beta_Galsidase"/>
</dbReference>
<dbReference type="InterPro" id="IPR006103">
    <property type="entry name" value="Glyco_hydro_2_cat"/>
</dbReference>
<dbReference type="InterPro" id="IPR023230">
    <property type="entry name" value="Glyco_hydro_2_CS"/>
</dbReference>
<dbReference type="InterPro" id="IPR006102">
    <property type="entry name" value="Glyco_hydro_2_Ig-like"/>
</dbReference>
<dbReference type="InterPro" id="IPR006104">
    <property type="entry name" value="Glyco_hydro_2_N"/>
</dbReference>
<dbReference type="InterPro" id="IPR017853">
    <property type="entry name" value="Glycoside_hydrolase_SF"/>
</dbReference>
<dbReference type="InterPro" id="IPR013783">
    <property type="entry name" value="Ig-like_fold"/>
</dbReference>
<dbReference type="InterPro" id="IPR032312">
    <property type="entry name" value="LacZ_4"/>
</dbReference>
<dbReference type="NCBIfam" id="NF007074">
    <property type="entry name" value="PRK09525.1"/>
    <property type="match status" value="1"/>
</dbReference>
<dbReference type="PANTHER" id="PTHR46323">
    <property type="entry name" value="BETA-GALACTOSIDASE"/>
    <property type="match status" value="1"/>
</dbReference>
<dbReference type="PANTHER" id="PTHR46323:SF2">
    <property type="entry name" value="BETA-GALACTOSIDASE"/>
    <property type="match status" value="1"/>
</dbReference>
<dbReference type="Pfam" id="PF02929">
    <property type="entry name" value="Bgal_small_N"/>
    <property type="match status" value="1"/>
</dbReference>
<dbReference type="Pfam" id="PF00703">
    <property type="entry name" value="Glyco_hydro_2"/>
    <property type="match status" value="1"/>
</dbReference>
<dbReference type="Pfam" id="PF02836">
    <property type="entry name" value="Glyco_hydro_2_C"/>
    <property type="match status" value="1"/>
</dbReference>
<dbReference type="Pfam" id="PF02837">
    <property type="entry name" value="Glyco_hydro_2_N"/>
    <property type="match status" value="1"/>
</dbReference>
<dbReference type="Pfam" id="PF16353">
    <property type="entry name" value="LacZ_4"/>
    <property type="match status" value="1"/>
</dbReference>
<dbReference type="PRINTS" id="PR00132">
    <property type="entry name" value="GLHYDRLASE2"/>
</dbReference>
<dbReference type="SMART" id="SM01038">
    <property type="entry name" value="Bgal_small_N"/>
    <property type="match status" value="1"/>
</dbReference>
<dbReference type="SUPFAM" id="SSF51445">
    <property type="entry name" value="(Trans)glycosidases"/>
    <property type="match status" value="1"/>
</dbReference>
<dbReference type="SUPFAM" id="SSF49303">
    <property type="entry name" value="beta-Galactosidase/glucuronidase domain"/>
    <property type="match status" value="2"/>
</dbReference>
<dbReference type="SUPFAM" id="SSF74650">
    <property type="entry name" value="Galactose mutarotase-like"/>
    <property type="match status" value="1"/>
</dbReference>
<dbReference type="SUPFAM" id="SSF49785">
    <property type="entry name" value="Galactose-binding domain-like"/>
    <property type="match status" value="1"/>
</dbReference>
<dbReference type="PROSITE" id="PS00719">
    <property type="entry name" value="GLYCOSYL_HYDROL_F2_1"/>
    <property type="match status" value="1"/>
</dbReference>
<dbReference type="PROSITE" id="PS00608">
    <property type="entry name" value="GLYCOSYL_HYDROL_F2_2"/>
    <property type="match status" value="1"/>
</dbReference>
<comment type="catalytic activity">
    <reaction evidence="1">
        <text>Hydrolysis of terminal non-reducing beta-D-galactose residues in beta-D-galactosides.</text>
        <dbReference type="EC" id="3.2.1.23"/>
    </reaction>
</comment>
<comment type="cofactor">
    <cofactor evidence="1">
        <name>Mg(2+)</name>
        <dbReference type="ChEBI" id="CHEBI:18420"/>
    </cofactor>
    <text evidence="1">Binds 2 magnesium ions per monomer.</text>
</comment>
<comment type="cofactor">
    <cofactor evidence="1">
        <name>Na(+)</name>
        <dbReference type="ChEBI" id="CHEBI:29101"/>
    </cofactor>
    <text evidence="1">Binds 1 sodium ion per monomer.</text>
</comment>
<comment type="subunit">
    <text evidence="1">Homotetramer.</text>
</comment>
<comment type="similarity">
    <text evidence="1">Belongs to the glycosyl hydrolase 2 family.</text>
</comment>
<accession>Q6D736</accession>
<reference key="1">
    <citation type="journal article" date="2004" name="Proc. Natl. Acad. Sci. U.S.A.">
        <title>Genome sequence of the enterobacterial phytopathogen Erwinia carotovora subsp. atroseptica and characterization of virulence factors.</title>
        <authorList>
            <person name="Bell K.S."/>
            <person name="Sebaihia M."/>
            <person name="Pritchard L."/>
            <person name="Holden M.T.G."/>
            <person name="Hyman L.J."/>
            <person name="Holeva M.C."/>
            <person name="Thomson N.R."/>
            <person name="Bentley S.D."/>
            <person name="Churcher L.J.C."/>
            <person name="Mungall K."/>
            <person name="Atkin R."/>
            <person name="Bason N."/>
            <person name="Brooks K."/>
            <person name="Chillingworth T."/>
            <person name="Clark K."/>
            <person name="Doggett J."/>
            <person name="Fraser A."/>
            <person name="Hance Z."/>
            <person name="Hauser H."/>
            <person name="Jagels K."/>
            <person name="Moule S."/>
            <person name="Norbertczak H."/>
            <person name="Ormond D."/>
            <person name="Price C."/>
            <person name="Quail M.A."/>
            <person name="Sanders M."/>
            <person name="Walker D."/>
            <person name="Whitehead S."/>
            <person name="Salmond G.P.C."/>
            <person name="Birch P.R.J."/>
            <person name="Parkhill J."/>
            <person name="Toth I.K."/>
        </authorList>
    </citation>
    <scope>NUCLEOTIDE SEQUENCE [LARGE SCALE GENOMIC DNA]</scope>
    <source>
        <strain>SCRI 1043 / ATCC BAA-672</strain>
    </source>
</reference>
<organism>
    <name type="scientific">Pectobacterium atrosepticum (strain SCRI 1043 / ATCC BAA-672)</name>
    <name type="common">Erwinia carotovora subsp. atroseptica</name>
    <dbReference type="NCBI Taxonomy" id="218491"/>
    <lineage>
        <taxon>Bacteria</taxon>
        <taxon>Pseudomonadati</taxon>
        <taxon>Pseudomonadota</taxon>
        <taxon>Gammaproteobacteria</taxon>
        <taxon>Enterobacterales</taxon>
        <taxon>Pectobacteriaceae</taxon>
        <taxon>Pectobacterium</taxon>
    </lineage>
</organism>
<name>BGAL_PECAS</name>
<protein>
    <recommendedName>
        <fullName evidence="1">Beta-galactosidase</fullName>
        <shortName evidence="1">Beta-gal</shortName>
        <ecNumber evidence="1">3.2.1.23</ecNumber>
    </recommendedName>
    <alternativeName>
        <fullName evidence="1">Lactase</fullName>
    </alternativeName>
</protein>
<gene>
    <name evidence="1" type="primary">lacZ</name>
    <name type="ordered locus">ECA1490</name>
</gene>
<feature type="chain" id="PRO_0000366986" description="Beta-galactosidase">
    <location>
        <begin position="1"/>
        <end position="1040"/>
    </location>
</feature>
<feature type="active site" description="Proton donor" evidence="1">
    <location>
        <position position="472"/>
    </location>
</feature>
<feature type="active site" description="Nucleophile" evidence="1">
    <location>
        <position position="548"/>
    </location>
</feature>
<feature type="binding site" evidence="1">
    <location>
        <position position="111"/>
    </location>
    <ligand>
        <name>substrate</name>
    </ligand>
</feature>
<feature type="binding site" evidence="1">
    <location>
        <position position="210"/>
    </location>
    <ligand>
        <name>Na(+)</name>
        <dbReference type="ChEBI" id="CHEBI:29101"/>
    </ligand>
</feature>
<feature type="binding site" evidence="1">
    <location>
        <position position="210"/>
    </location>
    <ligand>
        <name>substrate</name>
    </ligand>
</feature>
<feature type="binding site" evidence="1">
    <location>
        <position position="427"/>
    </location>
    <ligand>
        <name>Mg(2+)</name>
        <dbReference type="ChEBI" id="CHEBI:18420"/>
        <label>1</label>
    </ligand>
</feature>
<feature type="binding site" evidence="1">
    <location>
        <position position="429"/>
    </location>
    <ligand>
        <name>Mg(2+)</name>
        <dbReference type="ChEBI" id="CHEBI:18420"/>
        <label>1</label>
    </ligand>
</feature>
<feature type="binding site" evidence="1">
    <location>
        <position position="472"/>
    </location>
    <ligand>
        <name>Mg(2+)</name>
        <dbReference type="ChEBI" id="CHEBI:18420"/>
        <label>1</label>
    </ligand>
</feature>
<feature type="binding site" evidence="1">
    <location>
        <position position="472"/>
    </location>
    <ligand>
        <name>substrate</name>
    </ligand>
</feature>
<feature type="binding site" evidence="1">
    <location>
        <begin position="548"/>
        <end position="551"/>
    </location>
    <ligand>
        <name>substrate</name>
    </ligand>
</feature>
<feature type="binding site" evidence="1">
    <location>
        <position position="608"/>
    </location>
    <ligand>
        <name>Mg(2+)</name>
        <dbReference type="ChEBI" id="CHEBI:18420"/>
        <label>2</label>
    </ligand>
</feature>
<feature type="binding site" evidence="1">
    <location>
        <position position="612"/>
    </location>
    <ligand>
        <name>Na(+)</name>
        <dbReference type="ChEBI" id="CHEBI:29101"/>
    </ligand>
</feature>
<feature type="binding site" evidence="1">
    <location>
        <position position="615"/>
    </location>
    <ligand>
        <name>Na(+)</name>
        <dbReference type="ChEBI" id="CHEBI:29101"/>
    </ligand>
</feature>
<feature type="binding site" evidence="1">
    <location>
        <position position="615"/>
    </location>
    <ligand>
        <name>substrate</name>
    </ligand>
</feature>
<feature type="binding site" evidence="1">
    <location>
        <position position="1016"/>
    </location>
    <ligand>
        <name>substrate</name>
    </ligand>
</feature>
<feature type="site" description="Transition state stabilizer" evidence="1">
    <location>
        <position position="368"/>
    </location>
</feature>
<feature type="site" description="Transition state stabilizer" evidence="1">
    <location>
        <position position="402"/>
    </location>
</feature>